<name>TMEDA_DROYA</name>
<feature type="signal peptide" evidence="3">
    <location>
        <begin position="1"/>
        <end position="20"/>
    </location>
</feature>
<feature type="chain" id="PRO_0000393923" description="Transmembrane emp24 domain-containing protein bai" evidence="3">
    <location>
        <begin position="21"/>
        <end position="206"/>
    </location>
</feature>
<feature type="topological domain" description="Lumenal" evidence="3">
    <location>
        <begin position="21"/>
        <end position="172"/>
    </location>
</feature>
<feature type="transmembrane region" description="Helical" evidence="3">
    <location>
        <begin position="173"/>
        <end position="193"/>
    </location>
</feature>
<feature type="topological domain" description="Cytoplasmic" evidence="3">
    <location>
        <begin position="194"/>
        <end position="206"/>
    </location>
</feature>
<feature type="domain" description="GOLD" evidence="4">
    <location>
        <begin position="30"/>
        <end position="140"/>
    </location>
</feature>
<protein>
    <recommendedName>
        <fullName evidence="2">Transmembrane emp24 domain-containing protein bai</fullName>
    </recommendedName>
</protein>
<accession>B4PUZ3</accession>
<comment type="function">
    <text evidence="2">Eca and bai are essential, though not redundant, for dorsoventral patterning of the embryo. Specifically required during early embryogenesis for the activity of maternal tkv, while the zygotic tkv is not affected (By similarity).</text>
</comment>
<comment type="subcellular location">
    <subcellularLocation>
        <location evidence="1">Membrane</location>
        <topology evidence="3">Single-pass type I membrane protein</topology>
    </subcellularLocation>
</comment>
<comment type="similarity">
    <text evidence="3">Belongs to the EMP24/GP25L family.</text>
</comment>
<reference evidence="5" key="1">
    <citation type="journal article" date="2007" name="Nature">
        <title>Evolution of genes and genomes on the Drosophila phylogeny.</title>
        <authorList>
            <consortium name="Drosophila 12 genomes consortium"/>
        </authorList>
    </citation>
    <scope>NUCLEOTIDE SEQUENCE [LARGE SCALE GENOMIC DNA]</scope>
    <source>
        <strain evidence="5">Tai18E2 / Tucson 14021-0261.01</strain>
    </source>
</reference>
<sequence length="206" mass="23644">MARAALIVCLLMACAWSSHAVMFKLSPNTQKCLKEDIQANQLVMGEYEVSDVPGQIIDYIARDTKGHILSQKEHITKGKFSFMSEVYDAYEICFISKVPAHQRGIVQEVSLLTKKGVETKSYEGIGEASKLKPLEVDLKRLEDLSDSIVRDFVLMRKREEEMRDTNEKTNSRVLFFSIFSMCCLLGLATWQVLYLRRYFKAKKLIE</sequence>
<organism>
    <name type="scientific">Drosophila yakuba</name>
    <name type="common">Fruit fly</name>
    <dbReference type="NCBI Taxonomy" id="7245"/>
    <lineage>
        <taxon>Eukaryota</taxon>
        <taxon>Metazoa</taxon>
        <taxon>Ecdysozoa</taxon>
        <taxon>Arthropoda</taxon>
        <taxon>Hexapoda</taxon>
        <taxon>Insecta</taxon>
        <taxon>Pterygota</taxon>
        <taxon>Neoptera</taxon>
        <taxon>Endopterygota</taxon>
        <taxon>Diptera</taxon>
        <taxon>Brachycera</taxon>
        <taxon>Muscomorpha</taxon>
        <taxon>Ephydroidea</taxon>
        <taxon>Drosophilidae</taxon>
        <taxon>Drosophila</taxon>
        <taxon>Sophophora</taxon>
    </lineage>
</organism>
<dbReference type="EMBL" id="CM000160">
    <property type="protein sequence ID" value="EDW98842.1"/>
    <property type="molecule type" value="Genomic_DNA"/>
</dbReference>
<dbReference type="SMR" id="B4PUZ3"/>
<dbReference type="EnsemblMetazoa" id="FBtr0270063">
    <property type="protein sequence ID" value="FBpp0268555"/>
    <property type="gene ID" value="FBgn0240721"/>
</dbReference>
<dbReference type="EnsemblMetazoa" id="XM_002099094.4">
    <property type="protein sequence ID" value="XP_002099130.1"/>
    <property type="gene ID" value="LOC6538608"/>
</dbReference>
<dbReference type="GeneID" id="6538608"/>
<dbReference type="KEGG" id="dya:Dyak_GE23545"/>
<dbReference type="CTD" id="42996"/>
<dbReference type="eggNOG" id="KOG1691">
    <property type="taxonomic scope" value="Eukaryota"/>
</dbReference>
<dbReference type="HOGENOM" id="CLU_066963_3_1_1"/>
<dbReference type="OMA" id="DVFEACF"/>
<dbReference type="OrthoDB" id="759142at2759"/>
<dbReference type="PhylomeDB" id="B4PUZ3"/>
<dbReference type="ChiTaRS" id="bai">
    <property type="organism name" value="fly"/>
</dbReference>
<dbReference type="Proteomes" id="UP000002282">
    <property type="component" value="Chromosome 3R"/>
</dbReference>
<dbReference type="GO" id="GO:0005737">
    <property type="term" value="C:cytoplasm"/>
    <property type="evidence" value="ECO:0007669"/>
    <property type="project" value="GOC"/>
</dbReference>
<dbReference type="GO" id="GO:0016020">
    <property type="term" value="C:membrane"/>
    <property type="evidence" value="ECO:0007669"/>
    <property type="project" value="UniProtKB-SubCell"/>
</dbReference>
<dbReference type="GO" id="GO:0038024">
    <property type="term" value="F:cargo receptor activity"/>
    <property type="evidence" value="ECO:0007669"/>
    <property type="project" value="EnsemblMetazoa"/>
</dbReference>
<dbReference type="GO" id="GO:0009953">
    <property type="term" value="P:dorsal/ventral pattern formation"/>
    <property type="evidence" value="ECO:0000250"/>
    <property type="project" value="UniProtKB"/>
</dbReference>
<dbReference type="GO" id="GO:0006888">
    <property type="term" value="P:endoplasmic reticulum to Golgi vesicle-mediated transport"/>
    <property type="evidence" value="ECO:0007669"/>
    <property type="project" value="EnsemblMetazoa"/>
</dbReference>
<dbReference type="InterPro" id="IPR015720">
    <property type="entry name" value="Emp24-like"/>
</dbReference>
<dbReference type="InterPro" id="IPR009038">
    <property type="entry name" value="GOLD_dom"/>
</dbReference>
<dbReference type="PANTHER" id="PTHR22811">
    <property type="entry name" value="TRANSMEMBRANE EMP24 DOMAIN-CONTAINING PROTEIN"/>
    <property type="match status" value="1"/>
</dbReference>
<dbReference type="Pfam" id="PF01105">
    <property type="entry name" value="EMP24_GP25L"/>
    <property type="match status" value="1"/>
</dbReference>
<dbReference type="SMART" id="SM01190">
    <property type="entry name" value="EMP24_GP25L"/>
    <property type="match status" value="1"/>
</dbReference>
<dbReference type="PROSITE" id="PS50866">
    <property type="entry name" value="GOLD"/>
    <property type="match status" value="1"/>
</dbReference>
<gene>
    <name evidence="2" type="primary">bai</name>
    <name type="ORF">GE23545</name>
</gene>
<evidence type="ECO:0000250" key="1"/>
<evidence type="ECO:0000250" key="2">
    <source>
        <dbReference type="UniProtKB" id="Q8SXY6"/>
    </source>
</evidence>
<evidence type="ECO:0000255" key="3"/>
<evidence type="ECO:0000255" key="4">
    <source>
        <dbReference type="PROSITE-ProRule" id="PRU00096"/>
    </source>
</evidence>
<evidence type="ECO:0000312" key="5">
    <source>
        <dbReference type="EMBL" id="EDW98842.1"/>
    </source>
</evidence>
<keyword id="KW-0217">Developmental protein</keyword>
<keyword id="KW-0472">Membrane</keyword>
<keyword id="KW-0732">Signal</keyword>
<keyword id="KW-0812">Transmembrane</keyword>
<keyword id="KW-1133">Transmembrane helix</keyword>
<proteinExistence type="inferred from homology"/>